<feature type="chain" id="PRO_0000379945" description="Kelch-like protein diablo">
    <location>
        <begin position="1"/>
        <end position="633"/>
    </location>
</feature>
<feature type="domain" description="BTB" evidence="4">
    <location>
        <begin position="80"/>
        <end position="147"/>
    </location>
</feature>
<feature type="domain" description="BACK" evidence="3">
    <location>
        <begin position="182"/>
        <end position="284"/>
    </location>
</feature>
<feature type="repeat" description="Kelch 1" evidence="3">
    <location>
        <begin position="331"/>
        <end position="377"/>
    </location>
</feature>
<feature type="repeat" description="Kelch 2" evidence="3">
    <location>
        <begin position="379"/>
        <end position="425"/>
    </location>
</feature>
<feature type="repeat" description="Kelch 3" evidence="3">
    <location>
        <begin position="426"/>
        <end position="472"/>
    </location>
</feature>
<feature type="repeat" description="Kelch 4" evidence="3">
    <location>
        <begin position="474"/>
        <end position="519"/>
    </location>
</feature>
<feature type="repeat" description="Kelch 5" evidence="3">
    <location>
        <begin position="521"/>
        <end position="566"/>
    </location>
</feature>
<feature type="repeat" description="Kelch 6" evidence="3">
    <location>
        <begin position="567"/>
        <end position="613"/>
    </location>
</feature>
<feature type="region of interest" description="Disordered" evidence="5">
    <location>
        <begin position="1"/>
        <end position="62"/>
    </location>
</feature>
<feature type="compositionally biased region" description="Gly residues" evidence="5">
    <location>
        <begin position="7"/>
        <end position="25"/>
    </location>
</feature>
<feature type="compositionally biased region" description="Low complexity" evidence="5">
    <location>
        <begin position="26"/>
        <end position="45"/>
    </location>
</feature>
<sequence length="633" mass="69565">MGDLPGSTGGGGGVGGGGNGGGGPTIAGTNGNSTTGPGSSTGSTGLERPPSPARLSHTSEKHPKVTLSELNMLRRHRELCDVVLNVGGRKIFAHRVILSACSSYFCAMFTGELEESRQTEVTIRDIDENAMELLIDFCYTAHIIVEESNVQTLLPAACLLQLVEIQDICCEFLKRQLDPTNCLGIRAFADTHSCRELLRIADKFTQHNFQEVMESEEFLLLPVGQLVDIICSDELNVRSEEQVFNAVMSWLKYNVAERRQHLPQVLQHVRLPLLSPKFLVGTVGSDLLVRSDEACRDLVDEAKNYLLLPQERPLMQGPRTRPRKPTRRGEVLFAVGGWCSGDAIASVERFDPQTNDWKMVAPMSKRRCGVGVAVLNDLLYAVGGHDGQSYLNSIERYDPQTNQWSCDVAPTTSCRTSVGVAVLDGFLYAVGGQDGVQCLNHVERYDPKENKWSKVAPMTTRRLGVAVAVLGGFLYAIGGSDGQCPLNTVERYDPRHNKWVAVSPMSTRRKHLGCAVFNNYIYAVGGRDDCMELSSAERYNPLTNTWSPIVAMTSRRSGVGLAVVNGQLYAVGGFDGSAYLKTIEVYDPETNQWRLCGCMNYRRLGGGVGVMRAPQTENYMWCENSFKQQATSN</sequence>
<proteinExistence type="inferred from homology"/>
<reference evidence="7" key="1">
    <citation type="journal article" date="2007" name="Nature">
        <title>Evolution of genes and genomes on the Drosophila phylogeny.</title>
        <authorList>
            <consortium name="Drosophila 12 genomes consortium"/>
        </authorList>
    </citation>
    <scope>NUCLEOTIDE SEQUENCE [LARGE SCALE GENOMIC DNA]</scope>
    <source>
        <strain evidence="7">Tucson 14024-0371.13</strain>
    </source>
</reference>
<organism>
    <name type="scientific">Drosophila ananassae</name>
    <name type="common">Fruit fly</name>
    <dbReference type="NCBI Taxonomy" id="7217"/>
    <lineage>
        <taxon>Eukaryota</taxon>
        <taxon>Metazoa</taxon>
        <taxon>Ecdysozoa</taxon>
        <taxon>Arthropoda</taxon>
        <taxon>Hexapoda</taxon>
        <taxon>Insecta</taxon>
        <taxon>Pterygota</taxon>
        <taxon>Neoptera</taxon>
        <taxon>Endopterygota</taxon>
        <taxon>Diptera</taxon>
        <taxon>Brachycera</taxon>
        <taxon>Muscomorpha</taxon>
        <taxon>Ephydroidea</taxon>
        <taxon>Drosophilidae</taxon>
        <taxon>Drosophila</taxon>
        <taxon>Sophophora</taxon>
    </lineage>
</organism>
<comment type="function">
    <text evidence="1 2">Probable substrate-specific adapter of an E3 ubiquitin-protein ligase complex which mediates the ubiquitination and subsequent proteasomal degradation of target proteins. May have a role in synapse differentiation and growth (By similarity).</text>
</comment>
<comment type="pathway">
    <text evidence="2">Protein modification; protein ubiquitination.</text>
</comment>
<comment type="sequence caution" evidence="6">
    <conflict type="erroneous gene model prediction">
        <sequence resource="EMBL-CDS" id="EDV40149"/>
    </conflict>
</comment>
<accession>B3M9V8</accession>
<evidence type="ECO:0000250" key="1">
    <source>
        <dbReference type="UniProtKB" id="Q9VUU5"/>
    </source>
</evidence>
<evidence type="ECO:0000250" key="2">
    <source>
        <dbReference type="UniProtKB" id="Q9Y2M5"/>
    </source>
</evidence>
<evidence type="ECO:0000255" key="3"/>
<evidence type="ECO:0000255" key="4">
    <source>
        <dbReference type="PROSITE-ProRule" id="PRU00037"/>
    </source>
</evidence>
<evidence type="ECO:0000256" key="5">
    <source>
        <dbReference type="SAM" id="MobiDB-lite"/>
    </source>
</evidence>
<evidence type="ECO:0000305" key="6"/>
<evidence type="ECO:0000312" key="7">
    <source>
        <dbReference type="EMBL" id="EDV40149.1"/>
    </source>
</evidence>
<protein>
    <recommendedName>
        <fullName evidence="1">Kelch-like protein diablo</fullName>
    </recommendedName>
</protein>
<name>KLHDB_DROAN</name>
<keyword id="KW-0009">Actin-binding</keyword>
<keyword id="KW-0880">Kelch repeat</keyword>
<keyword id="KW-1185">Reference proteome</keyword>
<keyword id="KW-0677">Repeat</keyword>
<keyword id="KW-0833">Ubl conjugation pathway</keyword>
<dbReference type="EMBL" id="CH902618">
    <property type="protein sequence ID" value="EDV40149.1"/>
    <property type="status" value="ALT_SEQ"/>
    <property type="molecule type" value="Genomic_DNA"/>
</dbReference>
<dbReference type="SMR" id="B3M9V8"/>
<dbReference type="FunCoup" id="B3M9V8">
    <property type="interactions" value="1829"/>
</dbReference>
<dbReference type="STRING" id="7217.B3M9V8"/>
<dbReference type="EnsemblMetazoa" id="FBtr0391646">
    <property type="protein sequence ID" value="FBpp0351081"/>
    <property type="gene ID" value="FBgn0101089"/>
</dbReference>
<dbReference type="EnsemblMetazoa" id="XM_001957307.4">
    <property type="protein sequence ID" value="XP_001957343.2"/>
    <property type="gene ID" value="LOC6506729"/>
</dbReference>
<dbReference type="GeneID" id="6506729"/>
<dbReference type="KEGG" id="dan:6506729"/>
<dbReference type="CTD" id="53556"/>
<dbReference type="eggNOG" id="KOG4441">
    <property type="taxonomic scope" value="Eukaryota"/>
</dbReference>
<dbReference type="InParanoid" id="B3M9V8"/>
<dbReference type="OrthoDB" id="45365at2759"/>
<dbReference type="UniPathway" id="UPA00143"/>
<dbReference type="Proteomes" id="UP000007801">
    <property type="component" value="Unassembled WGS sequence"/>
</dbReference>
<dbReference type="GO" id="GO:0003779">
    <property type="term" value="F:actin binding"/>
    <property type="evidence" value="ECO:0007669"/>
    <property type="project" value="UniProtKB-KW"/>
</dbReference>
<dbReference type="GO" id="GO:0045886">
    <property type="term" value="P:negative regulation of synaptic assembly at neuromuscular junction"/>
    <property type="evidence" value="ECO:0000250"/>
    <property type="project" value="UniProtKB"/>
</dbReference>
<dbReference type="GO" id="GO:0016567">
    <property type="term" value="P:protein ubiquitination"/>
    <property type="evidence" value="ECO:0007669"/>
    <property type="project" value="UniProtKB-UniPathway"/>
</dbReference>
<dbReference type="CDD" id="cd18459">
    <property type="entry name" value="BACK_KLHL20"/>
    <property type="match status" value="1"/>
</dbReference>
<dbReference type="CDD" id="cd18249">
    <property type="entry name" value="BTB_POZ_KLHL20_KLEIP"/>
    <property type="match status" value="1"/>
</dbReference>
<dbReference type="FunFam" id="1.25.40.420:FF:000001">
    <property type="entry name" value="Kelch-like family member 12"/>
    <property type="match status" value="1"/>
</dbReference>
<dbReference type="FunFam" id="2.120.10.80:FF:000006">
    <property type="entry name" value="Kelch-like family member 20"/>
    <property type="match status" value="1"/>
</dbReference>
<dbReference type="FunFam" id="3.30.710.10:FF:000001">
    <property type="entry name" value="Kelch-like family member 20"/>
    <property type="match status" value="1"/>
</dbReference>
<dbReference type="Gene3D" id="1.25.40.420">
    <property type="match status" value="1"/>
</dbReference>
<dbReference type="Gene3D" id="2.120.10.80">
    <property type="entry name" value="Kelch-type beta propeller"/>
    <property type="match status" value="1"/>
</dbReference>
<dbReference type="Gene3D" id="3.30.710.10">
    <property type="entry name" value="Potassium Channel Kv1.1, Chain A"/>
    <property type="match status" value="1"/>
</dbReference>
<dbReference type="InterPro" id="IPR011705">
    <property type="entry name" value="BACK"/>
</dbReference>
<dbReference type="InterPro" id="IPR017096">
    <property type="entry name" value="BTB-kelch_protein"/>
</dbReference>
<dbReference type="InterPro" id="IPR000210">
    <property type="entry name" value="BTB/POZ_dom"/>
</dbReference>
<dbReference type="InterPro" id="IPR011043">
    <property type="entry name" value="Gal_Oxase/kelch_b-propeller"/>
</dbReference>
<dbReference type="InterPro" id="IPR015915">
    <property type="entry name" value="Kelch-typ_b-propeller"/>
</dbReference>
<dbReference type="InterPro" id="IPR006652">
    <property type="entry name" value="Kelch_1"/>
</dbReference>
<dbReference type="InterPro" id="IPR011333">
    <property type="entry name" value="SKP1/BTB/POZ_sf"/>
</dbReference>
<dbReference type="PANTHER" id="PTHR24412">
    <property type="entry name" value="KELCH PROTEIN"/>
    <property type="match status" value="1"/>
</dbReference>
<dbReference type="PANTHER" id="PTHR24412:SF451">
    <property type="entry name" value="KELCH-LIKE PROTEIN 20"/>
    <property type="match status" value="1"/>
</dbReference>
<dbReference type="Pfam" id="PF07707">
    <property type="entry name" value="BACK"/>
    <property type="match status" value="1"/>
</dbReference>
<dbReference type="Pfam" id="PF00651">
    <property type="entry name" value="BTB"/>
    <property type="match status" value="1"/>
</dbReference>
<dbReference type="Pfam" id="PF01344">
    <property type="entry name" value="Kelch_1"/>
    <property type="match status" value="6"/>
</dbReference>
<dbReference type="PIRSF" id="PIRSF037037">
    <property type="entry name" value="Kelch-like_protein_gigaxonin"/>
    <property type="match status" value="1"/>
</dbReference>
<dbReference type="SMART" id="SM00875">
    <property type="entry name" value="BACK"/>
    <property type="match status" value="1"/>
</dbReference>
<dbReference type="SMART" id="SM00225">
    <property type="entry name" value="BTB"/>
    <property type="match status" value="1"/>
</dbReference>
<dbReference type="SMART" id="SM00612">
    <property type="entry name" value="Kelch"/>
    <property type="match status" value="6"/>
</dbReference>
<dbReference type="SUPFAM" id="SSF50965">
    <property type="entry name" value="Galactose oxidase, central domain"/>
    <property type="match status" value="1"/>
</dbReference>
<dbReference type="SUPFAM" id="SSF117281">
    <property type="entry name" value="Kelch motif"/>
    <property type="match status" value="1"/>
</dbReference>
<dbReference type="SUPFAM" id="SSF54695">
    <property type="entry name" value="POZ domain"/>
    <property type="match status" value="1"/>
</dbReference>
<dbReference type="PROSITE" id="PS50097">
    <property type="entry name" value="BTB"/>
    <property type="match status" value="1"/>
</dbReference>
<gene>
    <name evidence="1" type="primary">dbo</name>
    <name type="ORF">GF24095</name>
</gene>